<keyword id="KW-0067">ATP-binding</keyword>
<keyword id="KW-0143">Chaperone</keyword>
<keyword id="KW-0963">Cytoplasm</keyword>
<keyword id="KW-0413">Isomerase</keyword>
<keyword id="KW-0547">Nucleotide-binding</keyword>
<gene>
    <name evidence="1" type="primary">groEL</name>
    <name evidence="1" type="synonym">groL</name>
    <name type="ordered locus">EcSMS35_4612</name>
</gene>
<reference key="1">
    <citation type="journal article" date="2008" name="J. Bacteriol.">
        <title>Insights into the environmental resistance gene pool from the genome sequence of the multidrug-resistant environmental isolate Escherichia coli SMS-3-5.</title>
        <authorList>
            <person name="Fricke W.F."/>
            <person name="Wright M.S."/>
            <person name="Lindell A.H."/>
            <person name="Harkins D.M."/>
            <person name="Baker-Austin C."/>
            <person name="Ravel J."/>
            <person name="Stepanauskas R."/>
        </authorList>
    </citation>
    <scope>NUCLEOTIDE SEQUENCE [LARGE SCALE GENOMIC DNA]</scope>
    <source>
        <strain>SMS-3-5 / SECEC</strain>
    </source>
</reference>
<proteinExistence type="inferred from homology"/>
<sequence>MAAKDVKFGNDARVKMLRGVNVLADAVKVTLGPKGRNVVLDKSFGAPTITKDGVSVAREIELEDKFENMGAQMVKEVASKANDAAGDGTTTATVLAQAIITEGLKAVAAGMNPMDLKRGIDKAVTAAVEELKALSVPCSDSKAIAQVGTISANSDETVGKLIAEAMDKVGKEGVITVEDGTGLQDELDVVEGMQFDRGYLSPYFINKPETGAVELESPFILLADKKISNIREMLPVLEAVAKAGKPLLIIAEDVEGEALATLVVNTMRGIVKVAAVKAPGFGDRRKAMLQDIATLTGGTVISEEIGMELEKATLEDLGQAKRVVINKDTTTIIDGVGEEAAIQGRVAQIRQQIEEATSDYDREKLQERVAKLAGGVAVIKVGAATEVEMKEKKARVEDALHATRAAVEEGVVAGGGVALIRVASKLADLRGQNEDQNVGIKVALRAMEAPLRQIVLNCGEEPSVVANTVKGGDGNYGYNAATEEYGNMIDMGILDPTKVTRSALQYAASVAGLMITTECMVTDLPKNDAADLGAAGGMGGMGGMGGMM</sequence>
<organism>
    <name type="scientific">Escherichia coli (strain SMS-3-5 / SECEC)</name>
    <dbReference type="NCBI Taxonomy" id="439855"/>
    <lineage>
        <taxon>Bacteria</taxon>
        <taxon>Pseudomonadati</taxon>
        <taxon>Pseudomonadota</taxon>
        <taxon>Gammaproteobacteria</taxon>
        <taxon>Enterobacterales</taxon>
        <taxon>Enterobacteriaceae</taxon>
        <taxon>Escherichia</taxon>
    </lineage>
</organism>
<protein>
    <recommendedName>
        <fullName evidence="1">Chaperonin GroEL</fullName>
        <ecNumber evidence="1">5.6.1.7</ecNumber>
    </recommendedName>
    <alternativeName>
        <fullName evidence="1">60 kDa chaperonin</fullName>
    </alternativeName>
    <alternativeName>
        <fullName evidence="1">Chaperonin-60</fullName>
        <shortName evidence="1">Cpn60</shortName>
    </alternativeName>
</protein>
<evidence type="ECO:0000255" key="1">
    <source>
        <dbReference type="HAMAP-Rule" id="MF_00600"/>
    </source>
</evidence>
<accession>B1LQG4</accession>
<comment type="function">
    <text evidence="1">Together with its co-chaperonin GroES, plays an essential role in assisting protein folding. The GroEL-GroES system forms a nano-cage that allows encapsulation of the non-native substrate proteins and provides a physical environment optimized to promote and accelerate protein folding.</text>
</comment>
<comment type="catalytic activity">
    <reaction evidence="1">
        <text>ATP + H2O + a folded polypeptide = ADP + phosphate + an unfolded polypeptide.</text>
        <dbReference type="EC" id="5.6.1.7"/>
    </reaction>
</comment>
<comment type="subunit">
    <text evidence="1">Forms a cylinder of 14 subunits composed of two heptameric rings stacked back-to-back. Interacts with the co-chaperonin GroES.</text>
</comment>
<comment type="subcellular location">
    <subcellularLocation>
        <location evidence="1">Cytoplasm</location>
    </subcellularLocation>
</comment>
<comment type="similarity">
    <text evidence="1">Belongs to the chaperonin (HSP60) family.</text>
</comment>
<feature type="chain" id="PRO_1000130013" description="Chaperonin GroEL">
    <location>
        <begin position="1"/>
        <end position="548"/>
    </location>
</feature>
<feature type="binding site" evidence="1">
    <location>
        <begin position="30"/>
        <end position="33"/>
    </location>
    <ligand>
        <name>ATP</name>
        <dbReference type="ChEBI" id="CHEBI:30616"/>
    </ligand>
</feature>
<feature type="binding site" evidence="1">
    <location>
        <position position="51"/>
    </location>
    <ligand>
        <name>ATP</name>
        <dbReference type="ChEBI" id="CHEBI:30616"/>
    </ligand>
</feature>
<feature type="binding site" evidence="1">
    <location>
        <begin position="87"/>
        <end position="91"/>
    </location>
    <ligand>
        <name>ATP</name>
        <dbReference type="ChEBI" id="CHEBI:30616"/>
    </ligand>
</feature>
<feature type="binding site" evidence="1">
    <location>
        <position position="415"/>
    </location>
    <ligand>
        <name>ATP</name>
        <dbReference type="ChEBI" id="CHEBI:30616"/>
    </ligand>
</feature>
<feature type="binding site" evidence="1">
    <location>
        <begin position="479"/>
        <end position="481"/>
    </location>
    <ligand>
        <name>ATP</name>
        <dbReference type="ChEBI" id="CHEBI:30616"/>
    </ligand>
</feature>
<feature type="binding site" evidence="1">
    <location>
        <position position="495"/>
    </location>
    <ligand>
        <name>ATP</name>
        <dbReference type="ChEBI" id="CHEBI:30616"/>
    </ligand>
</feature>
<dbReference type="EC" id="5.6.1.7" evidence="1"/>
<dbReference type="EMBL" id="CP000970">
    <property type="protein sequence ID" value="ACB19920.1"/>
    <property type="molecule type" value="Genomic_DNA"/>
</dbReference>
<dbReference type="RefSeq" id="WP_000729117.1">
    <property type="nucleotide sequence ID" value="NC_010498.1"/>
</dbReference>
<dbReference type="SMR" id="B1LQG4"/>
<dbReference type="GeneID" id="93777681"/>
<dbReference type="KEGG" id="ecm:EcSMS35_4612"/>
<dbReference type="HOGENOM" id="CLU_016503_3_0_6"/>
<dbReference type="Proteomes" id="UP000007011">
    <property type="component" value="Chromosome"/>
</dbReference>
<dbReference type="GO" id="GO:0005737">
    <property type="term" value="C:cytoplasm"/>
    <property type="evidence" value="ECO:0007669"/>
    <property type="project" value="UniProtKB-SubCell"/>
</dbReference>
<dbReference type="GO" id="GO:0005524">
    <property type="term" value="F:ATP binding"/>
    <property type="evidence" value="ECO:0007669"/>
    <property type="project" value="UniProtKB-UniRule"/>
</dbReference>
<dbReference type="GO" id="GO:0140662">
    <property type="term" value="F:ATP-dependent protein folding chaperone"/>
    <property type="evidence" value="ECO:0007669"/>
    <property type="project" value="InterPro"/>
</dbReference>
<dbReference type="GO" id="GO:0016853">
    <property type="term" value="F:isomerase activity"/>
    <property type="evidence" value="ECO:0007669"/>
    <property type="project" value="UniProtKB-KW"/>
</dbReference>
<dbReference type="GO" id="GO:0051082">
    <property type="term" value="F:unfolded protein binding"/>
    <property type="evidence" value="ECO:0007669"/>
    <property type="project" value="UniProtKB-UniRule"/>
</dbReference>
<dbReference type="GO" id="GO:0042026">
    <property type="term" value="P:protein refolding"/>
    <property type="evidence" value="ECO:0007669"/>
    <property type="project" value="UniProtKB-UniRule"/>
</dbReference>
<dbReference type="CDD" id="cd03344">
    <property type="entry name" value="GroEL"/>
    <property type="match status" value="1"/>
</dbReference>
<dbReference type="FunFam" id="1.10.560.10:FF:000001">
    <property type="entry name" value="60 kDa chaperonin"/>
    <property type="match status" value="1"/>
</dbReference>
<dbReference type="FunFam" id="3.50.7.10:FF:000001">
    <property type="entry name" value="60 kDa chaperonin"/>
    <property type="match status" value="1"/>
</dbReference>
<dbReference type="Gene3D" id="3.50.7.10">
    <property type="entry name" value="GroEL"/>
    <property type="match status" value="1"/>
</dbReference>
<dbReference type="Gene3D" id="1.10.560.10">
    <property type="entry name" value="GroEL-like equatorial domain"/>
    <property type="match status" value="1"/>
</dbReference>
<dbReference type="Gene3D" id="3.30.260.10">
    <property type="entry name" value="TCP-1-like chaperonin intermediate domain"/>
    <property type="match status" value="1"/>
</dbReference>
<dbReference type="HAMAP" id="MF_00600">
    <property type="entry name" value="CH60"/>
    <property type="match status" value="1"/>
</dbReference>
<dbReference type="InterPro" id="IPR018370">
    <property type="entry name" value="Chaperonin_Cpn60_CS"/>
</dbReference>
<dbReference type="InterPro" id="IPR001844">
    <property type="entry name" value="Cpn60/GroEL"/>
</dbReference>
<dbReference type="InterPro" id="IPR002423">
    <property type="entry name" value="Cpn60/GroEL/TCP-1"/>
</dbReference>
<dbReference type="InterPro" id="IPR027409">
    <property type="entry name" value="GroEL-like_apical_dom_sf"/>
</dbReference>
<dbReference type="InterPro" id="IPR027413">
    <property type="entry name" value="GROEL-like_equatorial_sf"/>
</dbReference>
<dbReference type="InterPro" id="IPR027410">
    <property type="entry name" value="TCP-1-like_intermed_sf"/>
</dbReference>
<dbReference type="NCBIfam" id="TIGR02348">
    <property type="entry name" value="GroEL"/>
    <property type="match status" value="1"/>
</dbReference>
<dbReference type="NCBIfam" id="NF000592">
    <property type="entry name" value="PRK00013.1"/>
    <property type="match status" value="1"/>
</dbReference>
<dbReference type="NCBIfam" id="NF009487">
    <property type="entry name" value="PRK12849.1"/>
    <property type="match status" value="1"/>
</dbReference>
<dbReference type="NCBIfam" id="NF009488">
    <property type="entry name" value="PRK12850.1"/>
    <property type="match status" value="1"/>
</dbReference>
<dbReference type="NCBIfam" id="NF009489">
    <property type="entry name" value="PRK12851.1"/>
    <property type="match status" value="1"/>
</dbReference>
<dbReference type="PANTHER" id="PTHR45633">
    <property type="entry name" value="60 KDA HEAT SHOCK PROTEIN, MITOCHONDRIAL"/>
    <property type="match status" value="1"/>
</dbReference>
<dbReference type="Pfam" id="PF00118">
    <property type="entry name" value="Cpn60_TCP1"/>
    <property type="match status" value="1"/>
</dbReference>
<dbReference type="PRINTS" id="PR00298">
    <property type="entry name" value="CHAPERONIN60"/>
</dbReference>
<dbReference type="SUPFAM" id="SSF52029">
    <property type="entry name" value="GroEL apical domain-like"/>
    <property type="match status" value="1"/>
</dbReference>
<dbReference type="SUPFAM" id="SSF48592">
    <property type="entry name" value="GroEL equatorial domain-like"/>
    <property type="match status" value="1"/>
</dbReference>
<dbReference type="SUPFAM" id="SSF54849">
    <property type="entry name" value="GroEL-intermediate domain like"/>
    <property type="match status" value="1"/>
</dbReference>
<dbReference type="PROSITE" id="PS00296">
    <property type="entry name" value="CHAPERONINS_CPN60"/>
    <property type="match status" value="1"/>
</dbReference>
<name>CH60_ECOSM</name>